<proteinExistence type="evidence at protein level"/>
<comment type="function">
    <text>Suppresses temperature-sensitive mutations in essential genes by modulating rho-dependent transcription termination.</text>
</comment>
<comment type="interaction">
    <interactant intactId="EBI-1114609">
        <id>P0AFW8</id>
    </interactant>
    <interactant intactId="EBI-545468">
        <id>P0AG30</id>
        <label>rho</label>
    </interactant>
    <organismsDiffer>false</organismsDiffer>
    <experiments>2</experiments>
</comment>
<comment type="sequence caution" evidence="1">
    <conflict type="erroneous initiation">
        <sequence resource="EMBL-CDS" id="CAA90752"/>
    </conflict>
    <text>Extended N-terminus.</text>
</comment>
<evidence type="ECO:0000305" key="1"/>
<evidence type="ECO:0007829" key="2">
    <source>
        <dbReference type="PDB" id="1SG5"/>
    </source>
</evidence>
<evidence type="ECO:0007829" key="3">
    <source>
        <dbReference type="PDB" id="8PTO"/>
    </source>
</evidence>
<dbReference type="EMBL" id="Z50870">
    <property type="protein sequence ID" value="CAA90752.1"/>
    <property type="status" value="ALT_INIT"/>
    <property type="molecule type" value="Genomic_DNA"/>
</dbReference>
<dbReference type="EMBL" id="D49445">
    <property type="protein sequence ID" value="BAA08429.1"/>
    <property type="molecule type" value="Genomic_DNA"/>
</dbReference>
<dbReference type="EMBL" id="U00096">
    <property type="protein sequence ID" value="AAC73300.2"/>
    <property type="molecule type" value="Genomic_DNA"/>
</dbReference>
<dbReference type="EMBL" id="AP009048">
    <property type="protein sequence ID" value="BAA77864.2"/>
    <property type="molecule type" value="Genomic_DNA"/>
</dbReference>
<dbReference type="RefSeq" id="NP_414731.2">
    <property type="nucleotide sequence ID" value="NC_000913.3"/>
</dbReference>
<dbReference type="PDB" id="1SG5">
    <property type="method" value="NMR"/>
    <property type="chains" value="A=1-84"/>
</dbReference>
<dbReference type="PDB" id="8PTM">
    <property type="method" value="EM"/>
    <property type="resolution" value="2.90 A"/>
    <property type="chains" value="a/b/c/d/e=2-84"/>
</dbReference>
<dbReference type="PDB" id="8PTN">
    <property type="method" value="EM"/>
    <property type="resolution" value="3.30 A"/>
    <property type="chains" value="a/b/c/d/e=2-84"/>
</dbReference>
<dbReference type="PDB" id="8PTO">
    <property type="method" value="EM"/>
    <property type="resolution" value="2.70 A"/>
    <property type="chains" value="a/b/c/d=2-84"/>
</dbReference>
<dbReference type="PDB" id="8PTP">
    <property type="method" value="EM"/>
    <property type="resolution" value="3.00 A"/>
    <property type="chains" value="a/b/c/d=2-84"/>
</dbReference>
<dbReference type="PDB" id="8W8D">
    <property type="method" value="EM"/>
    <property type="resolution" value="2.80 A"/>
    <property type="chains" value="a/b/c/d/e/f=1-84"/>
</dbReference>
<dbReference type="PDBsum" id="1SG5"/>
<dbReference type="PDBsum" id="8PTM"/>
<dbReference type="PDBsum" id="8PTN"/>
<dbReference type="PDBsum" id="8PTO"/>
<dbReference type="PDBsum" id="8PTP"/>
<dbReference type="PDBsum" id="8W8D"/>
<dbReference type="EMDB" id="EMD-17874"/>
<dbReference type="EMDB" id="EMD-17875"/>
<dbReference type="EMDB" id="EMD-17876"/>
<dbReference type="EMDB" id="EMD-17877"/>
<dbReference type="SMR" id="P0AFW8"/>
<dbReference type="BioGRID" id="4260946">
    <property type="interactions" value="408"/>
</dbReference>
<dbReference type="BioGRID" id="849291">
    <property type="interactions" value="1"/>
</dbReference>
<dbReference type="FunCoup" id="P0AFW8">
    <property type="interactions" value="73"/>
</dbReference>
<dbReference type="IntAct" id="P0AFW8">
    <property type="interactions" value="11"/>
</dbReference>
<dbReference type="MINT" id="P0AFW8"/>
<dbReference type="STRING" id="511145.b0189"/>
<dbReference type="jPOST" id="P0AFW8"/>
<dbReference type="PaxDb" id="511145-b0189"/>
<dbReference type="EnsemblBacteria" id="AAC73300">
    <property type="protein sequence ID" value="AAC73300"/>
    <property type="gene ID" value="b0189"/>
</dbReference>
<dbReference type="GeneID" id="944891"/>
<dbReference type="KEGG" id="ecj:JW0184"/>
<dbReference type="KEGG" id="eco:b0189"/>
<dbReference type="PATRIC" id="fig|511145.12.peg.196"/>
<dbReference type="EchoBASE" id="EB3012"/>
<dbReference type="eggNOG" id="COG4568">
    <property type="taxonomic scope" value="Bacteria"/>
</dbReference>
<dbReference type="HOGENOM" id="CLU_176324_0_1_6"/>
<dbReference type="InParanoid" id="P0AFW8"/>
<dbReference type="OMA" id="TEYQPIN"/>
<dbReference type="PhylomeDB" id="P0AFW8"/>
<dbReference type="BioCyc" id="EcoCyc:G6097-MONOMER"/>
<dbReference type="EvolutionaryTrace" id="P0AFW8"/>
<dbReference type="PRO" id="PR:P0AFW8"/>
<dbReference type="Proteomes" id="UP000000625">
    <property type="component" value="Chromosome"/>
</dbReference>
<dbReference type="GO" id="GO:0031554">
    <property type="term" value="P:regulation of termination of DNA-templated transcription"/>
    <property type="evidence" value="ECO:0000315"/>
    <property type="project" value="EcoCyc"/>
</dbReference>
<dbReference type="GO" id="GO:0031564">
    <property type="term" value="P:transcription antitermination"/>
    <property type="evidence" value="ECO:0000315"/>
    <property type="project" value="EcoCyc"/>
</dbReference>
<dbReference type="FunFam" id="2.30.30.400:FF:000001">
    <property type="entry name" value="Rho-dependent transcription termination (ROF)"/>
    <property type="match status" value="1"/>
</dbReference>
<dbReference type="Gene3D" id="2.30.30.400">
    <property type="entry name" value="Rof-like"/>
    <property type="match status" value="1"/>
</dbReference>
<dbReference type="InterPro" id="IPR009778">
    <property type="entry name" value="ROF"/>
</dbReference>
<dbReference type="InterPro" id="IPR038626">
    <property type="entry name" value="Rof-like_sf"/>
</dbReference>
<dbReference type="InterPro" id="IPR023534">
    <property type="entry name" value="Rof/RNase_P-like"/>
</dbReference>
<dbReference type="NCBIfam" id="NF008636">
    <property type="entry name" value="PRK11625.1"/>
    <property type="match status" value="1"/>
</dbReference>
<dbReference type="Pfam" id="PF07073">
    <property type="entry name" value="ROF"/>
    <property type="match status" value="1"/>
</dbReference>
<dbReference type="SUPFAM" id="SSF101744">
    <property type="entry name" value="Rof/RNase P subunit-like"/>
    <property type="match status" value="1"/>
</dbReference>
<accession>P0AFW8</accession>
<accession>P52098</accession>
<accession>P75670</accession>
<accession>Q9WVU2</accession>
<sequence length="84" mass="9480">MNDTYQPINCDDYDNLELACQHHLMLTLELKDGEKLQAKASDLVSRKNVEYLVVEAAGETRELRLDKITSFSHPEIGTVVVSES</sequence>
<gene>
    <name type="primary">rof</name>
    <name type="synonym">yaeO</name>
    <name type="ordered locus">b0189</name>
    <name type="ordered locus">JW0184</name>
</gene>
<protein>
    <recommendedName>
        <fullName>Protein rof</fullName>
    </recommendedName>
</protein>
<feature type="chain" id="PRO_0000097397" description="Protein rof">
    <location>
        <begin position="1"/>
        <end position="84"/>
    </location>
</feature>
<feature type="helix" evidence="3">
    <location>
        <begin position="10"/>
        <end position="22"/>
    </location>
</feature>
<feature type="strand" evidence="3">
    <location>
        <begin position="27"/>
        <end position="30"/>
    </location>
</feature>
<feature type="turn" evidence="2">
    <location>
        <begin position="31"/>
        <end position="33"/>
    </location>
</feature>
<feature type="strand" evidence="3">
    <location>
        <begin position="35"/>
        <end position="37"/>
    </location>
</feature>
<feature type="strand" evidence="3">
    <location>
        <begin position="40"/>
        <end position="46"/>
    </location>
</feature>
<feature type="strand" evidence="3">
    <location>
        <begin position="49"/>
        <end position="54"/>
    </location>
</feature>
<feature type="helix" evidence="3">
    <location>
        <begin position="56"/>
        <end position="58"/>
    </location>
</feature>
<feature type="strand" evidence="3">
    <location>
        <begin position="61"/>
        <end position="65"/>
    </location>
</feature>
<feature type="strand" evidence="3">
    <location>
        <begin position="68"/>
        <end position="72"/>
    </location>
</feature>
<feature type="strand" evidence="3">
    <location>
        <begin position="74"/>
        <end position="76"/>
    </location>
</feature>
<feature type="strand" evidence="2">
    <location>
        <begin position="77"/>
        <end position="79"/>
    </location>
</feature>
<name>ROF_ECOLI</name>
<keyword id="KW-0002">3D-structure</keyword>
<keyword id="KW-1185">Reference proteome</keyword>
<reference key="1">
    <citation type="journal article" date="1998" name="Mol. Microbiol.">
        <title>An Escherichia coli gene (yaeO) suppresses temperature-sensitive mutations in essential genes by modulating Rho-dependent transcription termination.</title>
        <authorList>
            <person name="Pichoff S."/>
            <person name="Alibaud L."/>
            <person name="Guedant A."/>
            <person name="Castanie M.-P."/>
            <person name="Bouche J.-P."/>
        </authorList>
    </citation>
    <scope>NUCLEOTIDE SEQUENCE [GENOMIC DNA]</scope>
    <scope>CHARACTERIZATION</scope>
    <source>
        <strain>K12</strain>
    </source>
</reference>
<reference key="2">
    <citation type="submission" date="1995-12" db="EMBL/GenBank/DDBJ databases">
        <authorList>
            <person name="Yamamoto Y."/>
        </authorList>
    </citation>
    <scope>NUCLEOTIDE SEQUENCE [GENOMIC DNA]</scope>
    <source>
        <strain>K12 / W3110 / ATCC 27325 / DSM 5911</strain>
    </source>
</reference>
<reference key="3">
    <citation type="submission" date="1996-02" db="EMBL/GenBank/DDBJ databases">
        <title>Systematic sequencing of the Escherichia coli genome: analysis of the 4.0 - 6.0 min (189,987 - 281,416bp) region.</title>
        <authorList>
            <person name="Takemoto K."/>
            <person name="Mori H."/>
            <person name="Murayama N."/>
            <person name="Kataoka K."/>
            <person name="Yano M."/>
            <person name="Itoh T."/>
            <person name="Yamamoto Y."/>
            <person name="Inokuchi H."/>
            <person name="Miki T."/>
            <person name="Hatada E."/>
            <person name="Fukuda R."/>
            <person name="Ichihara S."/>
            <person name="Mizuno T."/>
            <person name="Makino K."/>
            <person name="Nakata A."/>
            <person name="Yura T."/>
            <person name="Sampei G."/>
            <person name="Mizobuchi K."/>
        </authorList>
    </citation>
    <scope>NUCLEOTIDE SEQUENCE [LARGE SCALE GENOMIC DNA]</scope>
    <source>
        <strain>K12 / W3110 / ATCC 27325 / DSM 5911</strain>
    </source>
</reference>
<reference key="4">
    <citation type="journal article" date="1997" name="Science">
        <title>The complete genome sequence of Escherichia coli K-12.</title>
        <authorList>
            <person name="Blattner F.R."/>
            <person name="Plunkett G. III"/>
            <person name="Bloch C.A."/>
            <person name="Perna N.T."/>
            <person name="Burland V."/>
            <person name="Riley M."/>
            <person name="Collado-Vides J."/>
            <person name="Glasner J.D."/>
            <person name="Rode C.K."/>
            <person name="Mayhew G.F."/>
            <person name="Gregor J."/>
            <person name="Davis N.W."/>
            <person name="Kirkpatrick H.A."/>
            <person name="Goeden M.A."/>
            <person name="Rose D.J."/>
            <person name="Mau B."/>
            <person name="Shao Y."/>
        </authorList>
    </citation>
    <scope>NUCLEOTIDE SEQUENCE [LARGE SCALE GENOMIC DNA]</scope>
    <source>
        <strain>K12 / MG1655 / ATCC 47076</strain>
    </source>
</reference>
<reference key="5">
    <citation type="journal article" date="2006" name="Mol. Syst. Biol.">
        <title>Highly accurate genome sequences of Escherichia coli K-12 strains MG1655 and W3110.</title>
        <authorList>
            <person name="Hayashi K."/>
            <person name="Morooka N."/>
            <person name="Yamamoto Y."/>
            <person name="Fujita K."/>
            <person name="Isono K."/>
            <person name="Choi S."/>
            <person name="Ohtsubo E."/>
            <person name="Baba T."/>
            <person name="Wanner B.L."/>
            <person name="Mori H."/>
            <person name="Horiuchi T."/>
        </authorList>
    </citation>
    <scope>NUCLEOTIDE SEQUENCE [LARGE SCALE GENOMIC DNA]</scope>
    <scope>SEQUENCE REVISION TO 72-73</scope>
    <source>
        <strain>K12 / W3110 / ATCC 27325 / DSM 5911</strain>
    </source>
</reference>
<organism>
    <name type="scientific">Escherichia coli (strain K12)</name>
    <dbReference type="NCBI Taxonomy" id="83333"/>
    <lineage>
        <taxon>Bacteria</taxon>
        <taxon>Pseudomonadati</taxon>
        <taxon>Pseudomonadota</taxon>
        <taxon>Gammaproteobacteria</taxon>
        <taxon>Enterobacterales</taxon>
        <taxon>Enterobacteriaceae</taxon>
        <taxon>Escherichia</taxon>
    </lineage>
</organism>